<organism>
    <name type="scientific">Mus musculus</name>
    <name type="common">Mouse</name>
    <dbReference type="NCBI Taxonomy" id="10090"/>
    <lineage>
        <taxon>Eukaryota</taxon>
        <taxon>Metazoa</taxon>
        <taxon>Chordata</taxon>
        <taxon>Craniata</taxon>
        <taxon>Vertebrata</taxon>
        <taxon>Euteleostomi</taxon>
        <taxon>Mammalia</taxon>
        <taxon>Eutheria</taxon>
        <taxon>Euarchontoglires</taxon>
        <taxon>Glires</taxon>
        <taxon>Rodentia</taxon>
        <taxon>Myomorpha</taxon>
        <taxon>Muroidea</taxon>
        <taxon>Muridae</taxon>
        <taxon>Murinae</taxon>
        <taxon>Mus</taxon>
        <taxon>Mus</taxon>
    </lineage>
</organism>
<dbReference type="EMBL" id="AK029709">
    <property type="protein sequence ID" value="BAC26574.1"/>
    <property type="molecule type" value="mRNA"/>
</dbReference>
<dbReference type="EMBL" id="AK054457">
    <property type="protein sequence ID" value="BAC35785.1"/>
    <property type="molecule type" value="mRNA"/>
</dbReference>
<dbReference type="EMBL" id="BC053929">
    <property type="protein sequence ID" value="AAH53929.1"/>
    <property type="molecule type" value="mRNA"/>
</dbReference>
<dbReference type="CCDS" id="CCDS25959.1">
    <molecule id="Q8C0V9-1"/>
</dbReference>
<dbReference type="RefSeq" id="NP_082403.2">
    <molecule id="Q8C0V9-1"/>
    <property type="nucleotide sequence ID" value="NM_028127.3"/>
</dbReference>
<dbReference type="RefSeq" id="XP_006516040.1">
    <molecule id="Q8C0V9-1"/>
    <property type="nucleotide sequence ID" value="XM_006515977.5"/>
</dbReference>
<dbReference type="RefSeq" id="XP_036013387.1">
    <molecule id="Q8C0V9-1"/>
    <property type="nucleotide sequence ID" value="XM_036157494.1"/>
</dbReference>
<dbReference type="SMR" id="Q8C0V9"/>
<dbReference type="FunCoup" id="Q8C0V9">
    <property type="interactions" value="503"/>
</dbReference>
<dbReference type="STRING" id="10090.ENSMUSP00000052202"/>
<dbReference type="iPTMnet" id="Q8C0V9"/>
<dbReference type="PhosphoSitePlus" id="Q8C0V9"/>
<dbReference type="jPOST" id="Q8C0V9"/>
<dbReference type="PaxDb" id="10090-ENSMUSP00000052202"/>
<dbReference type="PeptideAtlas" id="Q8C0V9"/>
<dbReference type="ProteomicsDB" id="271805">
    <molecule id="Q8C0V9-1"/>
</dbReference>
<dbReference type="ProteomicsDB" id="271806">
    <molecule id="Q8C0V9-2"/>
</dbReference>
<dbReference type="ProteomicsDB" id="271807">
    <molecule id="Q8C0V9-3"/>
</dbReference>
<dbReference type="Pumba" id="Q8C0V9"/>
<dbReference type="Antibodypedia" id="35">
    <property type="antibodies" value="99 antibodies from 25 providers"/>
</dbReference>
<dbReference type="DNASU" id="319710"/>
<dbReference type="Ensembl" id="ENSMUST00000057859.9">
    <molecule id="Q8C0V9-1"/>
    <property type="protein sequence ID" value="ENSMUSP00000052202.8"/>
    <property type="gene ID" value="ENSMUSG00000048285.10"/>
</dbReference>
<dbReference type="GeneID" id="319710"/>
<dbReference type="KEGG" id="mmu:319710"/>
<dbReference type="UCSC" id="uc007ntv.1">
    <molecule id="Q8C0V9-1"/>
    <property type="organism name" value="mouse"/>
</dbReference>
<dbReference type="UCSC" id="uc007ntw.1">
    <molecule id="Q8C0V9-3"/>
    <property type="organism name" value="mouse"/>
</dbReference>
<dbReference type="UCSC" id="uc007ntx.1">
    <molecule id="Q8C0V9-2"/>
    <property type="organism name" value="mouse"/>
</dbReference>
<dbReference type="AGR" id="MGI:2442579"/>
<dbReference type="CTD" id="122786"/>
<dbReference type="MGI" id="MGI:2442579">
    <property type="gene designation" value="Frmd6"/>
</dbReference>
<dbReference type="VEuPathDB" id="HostDB:ENSMUSG00000048285"/>
<dbReference type="eggNOG" id="KOG4371">
    <property type="taxonomic scope" value="Eukaryota"/>
</dbReference>
<dbReference type="GeneTree" id="ENSGT00940000155517"/>
<dbReference type="HOGENOM" id="CLU_036910_1_1_1"/>
<dbReference type="InParanoid" id="Q8C0V9"/>
<dbReference type="OMA" id="QPILRHI"/>
<dbReference type="OrthoDB" id="5957665at2759"/>
<dbReference type="PhylomeDB" id="Q8C0V9"/>
<dbReference type="TreeFam" id="TF319780"/>
<dbReference type="BioGRID-ORCS" id="319710">
    <property type="hits" value="0 hits in 78 CRISPR screens"/>
</dbReference>
<dbReference type="ChiTaRS" id="Frmd6">
    <property type="organism name" value="mouse"/>
</dbReference>
<dbReference type="PRO" id="PR:Q8C0V9"/>
<dbReference type="Proteomes" id="UP000000589">
    <property type="component" value="Chromosome 12"/>
</dbReference>
<dbReference type="RNAct" id="Q8C0V9">
    <property type="molecule type" value="protein"/>
</dbReference>
<dbReference type="Bgee" id="ENSMUSG00000048285">
    <property type="expression patterns" value="Expressed in vault of skull and 239 other cell types or tissues"/>
</dbReference>
<dbReference type="GO" id="GO:0043296">
    <property type="term" value="C:apical junction complex"/>
    <property type="evidence" value="ECO:0000314"/>
    <property type="project" value="MGI"/>
</dbReference>
<dbReference type="GO" id="GO:0005737">
    <property type="term" value="C:cytoplasm"/>
    <property type="evidence" value="ECO:0000250"/>
    <property type="project" value="UniProtKB"/>
</dbReference>
<dbReference type="GO" id="GO:0005856">
    <property type="term" value="C:cytoskeleton"/>
    <property type="evidence" value="ECO:0007669"/>
    <property type="project" value="InterPro"/>
</dbReference>
<dbReference type="GO" id="GO:0005886">
    <property type="term" value="C:plasma membrane"/>
    <property type="evidence" value="ECO:0000250"/>
    <property type="project" value="UniProtKB"/>
</dbReference>
<dbReference type="GO" id="GO:0003383">
    <property type="term" value="P:apical constriction"/>
    <property type="evidence" value="ECO:0000316"/>
    <property type="project" value="MGI"/>
</dbReference>
<dbReference type="GO" id="GO:0008104">
    <property type="term" value="P:protein localization"/>
    <property type="evidence" value="ECO:0000315"/>
    <property type="project" value="MGI"/>
</dbReference>
<dbReference type="GO" id="GO:0032970">
    <property type="term" value="P:regulation of actin filament-based process"/>
    <property type="evidence" value="ECO:0000316"/>
    <property type="project" value="MGI"/>
</dbReference>
<dbReference type="CDD" id="cd14473">
    <property type="entry name" value="FERM_B-lobe"/>
    <property type="match status" value="1"/>
</dbReference>
<dbReference type="CDD" id="cd13185">
    <property type="entry name" value="FERM_C_FRMD1_FRMD6"/>
    <property type="match status" value="1"/>
</dbReference>
<dbReference type="FunFam" id="1.20.80.10:FF:000015">
    <property type="entry name" value="FERM domain-containing protein 6 isoform X2"/>
    <property type="match status" value="1"/>
</dbReference>
<dbReference type="FunFam" id="2.30.29.30:FF:000134">
    <property type="entry name" value="Putative FERM domain-containing protein 6"/>
    <property type="match status" value="1"/>
</dbReference>
<dbReference type="FunFam" id="3.10.20.90:FF:000079">
    <property type="entry name" value="Putative FERM domain-containing protein 6"/>
    <property type="match status" value="1"/>
</dbReference>
<dbReference type="Gene3D" id="1.20.80.10">
    <property type="match status" value="1"/>
</dbReference>
<dbReference type="Gene3D" id="3.10.20.90">
    <property type="entry name" value="Phosphatidylinositol 3-kinase Catalytic Subunit, Chain A, domain 1"/>
    <property type="match status" value="1"/>
</dbReference>
<dbReference type="Gene3D" id="2.30.29.30">
    <property type="entry name" value="Pleckstrin-homology domain (PH domain)/Phosphotyrosine-binding domain (PTB)"/>
    <property type="match status" value="1"/>
</dbReference>
<dbReference type="InterPro" id="IPR019749">
    <property type="entry name" value="Band_41_domain"/>
</dbReference>
<dbReference type="InterPro" id="IPR014352">
    <property type="entry name" value="FERM/acyl-CoA-bd_prot_sf"/>
</dbReference>
<dbReference type="InterPro" id="IPR035963">
    <property type="entry name" value="FERM_2"/>
</dbReference>
<dbReference type="InterPro" id="IPR019748">
    <property type="entry name" value="FERM_central"/>
</dbReference>
<dbReference type="InterPro" id="IPR000299">
    <property type="entry name" value="FERM_domain"/>
</dbReference>
<dbReference type="InterPro" id="IPR018979">
    <property type="entry name" value="FERM_N"/>
</dbReference>
<dbReference type="InterPro" id="IPR018980">
    <property type="entry name" value="FERM_PH-like_C"/>
</dbReference>
<dbReference type="InterPro" id="IPR041781">
    <property type="entry name" value="FRMD6-FERM_C"/>
</dbReference>
<dbReference type="InterPro" id="IPR047145">
    <property type="entry name" value="FRMD6-like"/>
</dbReference>
<dbReference type="InterPro" id="IPR011993">
    <property type="entry name" value="PH-like_dom_sf"/>
</dbReference>
<dbReference type="InterPro" id="IPR029071">
    <property type="entry name" value="Ubiquitin-like_domsf"/>
</dbReference>
<dbReference type="PANTHER" id="PTHR13429">
    <property type="entry name" value="FERM DOMAIN (PROTEIN4.1-EZRIN-RADIXIN-MOESIN) FAMILY"/>
    <property type="match status" value="1"/>
</dbReference>
<dbReference type="PANTHER" id="PTHR13429:SF11">
    <property type="entry name" value="FERM DOMAIN-CONTAINING PROTEIN 6"/>
    <property type="match status" value="1"/>
</dbReference>
<dbReference type="Pfam" id="PF09380">
    <property type="entry name" value="FERM_C"/>
    <property type="match status" value="1"/>
</dbReference>
<dbReference type="Pfam" id="PF00373">
    <property type="entry name" value="FERM_M"/>
    <property type="match status" value="1"/>
</dbReference>
<dbReference type="Pfam" id="PF09379">
    <property type="entry name" value="FERM_N"/>
    <property type="match status" value="1"/>
</dbReference>
<dbReference type="SMART" id="SM00295">
    <property type="entry name" value="B41"/>
    <property type="match status" value="1"/>
</dbReference>
<dbReference type="SMART" id="SM01196">
    <property type="entry name" value="FERM_C"/>
    <property type="match status" value="1"/>
</dbReference>
<dbReference type="SUPFAM" id="SSF50729">
    <property type="entry name" value="PH domain-like"/>
    <property type="match status" value="1"/>
</dbReference>
<dbReference type="SUPFAM" id="SSF47031">
    <property type="entry name" value="Second domain of FERM"/>
    <property type="match status" value="1"/>
</dbReference>
<dbReference type="SUPFAM" id="SSF54236">
    <property type="entry name" value="Ubiquitin-like"/>
    <property type="match status" value="1"/>
</dbReference>
<dbReference type="PROSITE" id="PS50057">
    <property type="entry name" value="FERM_3"/>
    <property type="match status" value="1"/>
</dbReference>
<protein>
    <recommendedName>
        <fullName>FERM domain-containing protein 6</fullName>
    </recommendedName>
</protein>
<comment type="subcellular location">
    <subcellularLocation>
        <location evidence="1">Cytoplasm</location>
    </subcellularLocation>
    <subcellularLocation>
        <location evidence="1">Cell membrane</location>
        <topology evidence="1">Peripheral membrane protein</topology>
        <orientation evidence="1">Cytoplasmic side</orientation>
    </subcellularLocation>
    <text evidence="1">Can colocalize with actin.</text>
</comment>
<comment type="alternative products">
    <event type="alternative splicing"/>
    <isoform>
        <id>Q8C0V9-1</id>
        <name>1</name>
        <sequence type="displayed"/>
    </isoform>
    <isoform>
        <id>Q8C0V9-2</id>
        <name>2</name>
        <sequence type="described" ref="VSP_008024 VSP_008025 VSP_008026"/>
    </isoform>
    <isoform>
        <id>Q8C0V9-3</id>
        <name>3</name>
        <sequence type="described" ref="VSP_008026 VSP_008027 VSP_008028"/>
    </isoform>
</comment>
<proteinExistence type="evidence at protein level"/>
<sequence>MNKLTFHNNKAMQDRRRVCIFLPNDKSVSIIINVKILCHQLLVQVCDLLRLKDSHLFGLSVIQNNEHVYMELSQKLYKYCPKEWKKEASKVRQYEVTWGIDQFGPPMIIHFRVQYYVENGKLISDRIARYYYYWHLRKQVLHSQCVLREEAYFLLAAFALQADLGNFKRKLHHGDYFEPEAYFPAWVVSKRGKDYILKHIPNMHKDQFALTASEAYLKYIKEAVRLDDVAIHYYRLYKDKREAEGSLTLGLTMRGIQIFQNLEEEKQLLYDFPWTNVGKLVFVGKKFEILPDGLPSARKLVYYTGCPTRSRHLLQLLSNSHRLYMNLQPVLRHLRKQEENEEKKQYRESYISDNLDLDMDPLEKRSRASGSSAGSVKHKRLSRHSTASHSSSHTSGIEADTKPRDPGPEDSCSGSAMHRKLKTCSSMTSHGSSHTSGVESGGKDRLEEDSQDEEIEMLVDDPRDLEPMPEESLEVSPEMCIYITEDMLLSRKLNGHSGLIVKEIGSSTSSSSETVVRLRGQSTDSLPQTICRKPKTSTDRHSLSLDDIRLYQKDFLRIAGLCQDTAQSYTFGCGHELDESGLYCNSCLAQQCVNIQDAFPVKRASKYFSLDLTHDEVPEFVV</sequence>
<name>FRMD6_MOUSE</name>
<accession>Q8C0V9</accession>
<accession>Q8BW34</accession>
<gene>
    <name type="primary">Frmd6</name>
</gene>
<keyword id="KW-0025">Alternative splicing</keyword>
<keyword id="KW-1003">Cell membrane</keyword>
<keyword id="KW-0963">Cytoplasm</keyword>
<keyword id="KW-0472">Membrane</keyword>
<keyword id="KW-0597">Phosphoprotein</keyword>
<keyword id="KW-1185">Reference proteome</keyword>
<evidence type="ECO:0000250" key="1">
    <source>
        <dbReference type="UniProtKB" id="Q96NE9"/>
    </source>
</evidence>
<evidence type="ECO:0000255" key="2">
    <source>
        <dbReference type="PROSITE-ProRule" id="PRU00084"/>
    </source>
</evidence>
<evidence type="ECO:0000256" key="3">
    <source>
        <dbReference type="SAM" id="MobiDB-lite"/>
    </source>
</evidence>
<evidence type="ECO:0000303" key="4">
    <source>
    </source>
</evidence>
<evidence type="ECO:0000305" key="5"/>
<evidence type="ECO:0007744" key="6">
    <source>
    </source>
</evidence>
<evidence type="ECO:0007744" key="7">
    <source>
    </source>
</evidence>
<reference key="1">
    <citation type="journal article" date="2005" name="Science">
        <title>The transcriptional landscape of the mammalian genome.</title>
        <authorList>
            <person name="Carninci P."/>
            <person name="Kasukawa T."/>
            <person name="Katayama S."/>
            <person name="Gough J."/>
            <person name="Frith M.C."/>
            <person name="Maeda N."/>
            <person name="Oyama R."/>
            <person name="Ravasi T."/>
            <person name="Lenhard B."/>
            <person name="Wells C."/>
            <person name="Kodzius R."/>
            <person name="Shimokawa K."/>
            <person name="Bajic V.B."/>
            <person name="Brenner S.E."/>
            <person name="Batalov S."/>
            <person name="Forrest A.R."/>
            <person name="Zavolan M."/>
            <person name="Davis M.J."/>
            <person name="Wilming L.G."/>
            <person name="Aidinis V."/>
            <person name="Allen J.E."/>
            <person name="Ambesi-Impiombato A."/>
            <person name="Apweiler R."/>
            <person name="Aturaliya R.N."/>
            <person name="Bailey T.L."/>
            <person name="Bansal M."/>
            <person name="Baxter L."/>
            <person name="Beisel K.W."/>
            <person name="Bersano T."/>
            <person name="Bono H."/>
            <person name="Chalk A.M."/>
            <person name="Chiu K.P."/>
            <person name="Choudhary V."/>
            <person name="Christoffels A."/>
            <person name="Clutterbuck D.R."/>
            <person name="Crowe M.L."/>
            <person name="Dalla E."/>
            <person name="Dalrymple B.P."/>
            <person name="de Bono B."/>
            <person name="Della Gatta G."/>
            <person name="di Bernardo D."/>
            <person name="Down T."/>
            <person name="Engstrom P."/>
            <person name="Fagiolini M."/>
            <person name="Faulkner G."/>
            <person name="Fletcher C.F."/>
            <person name="Fukushima T."/>
            <person name="Furuno M."/>
            <person name="Futaki S."/>
            <person name="Gariboldi M."/>
            <person name="Georgii-Hemming P."/>
            <person name="Gingeras T.R."/>
            <person name="Gojobori T."/>
            <person name="Green R.E."/>
            <person name="Gustincich S."/>
            <person name="Harbers M."/>
            <person name="Hayashi Y."/>
            <person name="Hensch T.K."/>
            <person name="Hirokawa N."/>
            <person name="Hill D."/>
            <person name="Huminiecki L."/>
            <person name="Iacono M."/>
            <person name="Ikeo K."/>
            <person name="Iwama A."/>
            <person name="Ishikawa T."/>
            <person name="Jakt M."/>
            <person name="Kanapin A."/>
            <person name="Katoh M."/>
            <person name="Kawasawa Y."/>
            <person name="Kelso J."/>
            <person name="Kitamura H."/>
            <person name="Kitano H."/>
            <person name="Kollias G."/>
            <person name="Krishnan S.P."/>
            <person name="Kruger A."/>
            <person name="Kummerfeld S.K."/>
            <person name="Kurochkin I.V."/>
            <person name="Lareau L.F."/>
            <person name="Lazarevic D."/>
            <person name="Lipovich L."/>
            <person name="Liu J."/>
            <person name="Liuni S."/>
            <person name="McWilliam S."/>
            <person name="Madan Babu M."/>
            <person name="Madera M."/>
            <person name="Marchionni L."/>
            <person name="Matsuda H."/>
            <person name="Matsuzawa S."/>
            <person name="Miki H."/>
            <person name="Mignone F."/>
            <person name="Miyake S."/>
            <person name="Morris K."/>
            <person name="Mottagui-Tabar S."/>
            <person name="Mulder N."/>
            <person name="Nakano N."/>
            <person name="Nakauchi H."/>
            <person name="Ng P."/>
            <person name="Nilsson R."/>
            <person name="Nishiguchi S."/>
            <person name="Nishikawa S."/>
            <person name="Nori F."/>
            <person name="Ohara O."/>
            <person name="Okazaki Y."/>
            <person name="Orlando V."/>
            <person name="Pang K.C."/>
            <person name="Pavan W.J."/>
            <person name="Pavesi G."/>
            <person name="Pesole G."/>
            <person name="Petrovsky N."/>
            <person name="Piazza S."/>
            <person name="Reed J."/>
            <person name="Reid J.F."/>
            <person name="Ring B.Z."/>
            <person name="Ringwald M."/>
            <person name="Rost B."/>
            <person name="Ruan Y."/>
            <person name="Salzberg S.L."/>
            <person name="Sandelin A."/>
            <person name="Schneider C."/>
            <person name="Schoenbach C."/>
            <person name="Sekiguchi K."/>
            <person name="Semple C.A."/>
            <person name="Seno S."/>
            <person name="Sessa L."/>
            <person name="Sheng Y."/>
            <person name="Shibata Y."/>
            <person name="Shimada H."/>
            <person name="Shimada K."/>
            <person name="Silva D."/>
            <person name="Sinclair B."/>
            <person name="Sperling S."/>
            <person name="Stupka E."/>
            <person name="Sugiura K."/>
            <person name="Sultana R."/>
            <person name="Takenaka Y."/>
            <person name="Taki K."/>
            <person name="Tammoja K."/>
            <person name="Tan S.L."/>
            <person name="Tang S."/>
            <person name="Taylor M.S."/>
            <person name="Tegner J."/>
            <person name="Teichmann S.A."/>
            <person name="Ueda H.R."/>
            <person name="van Nimwegen E."/>
            <person name="Verardo R."/>
            <person name="Wei C.L."/>
            <person name="Yagi K."/>
            <person name="Yamanishi H."/>
            <person name="Zabarovsky E."/>
            <person name="Zhu S."/>
            <person name="Zimmer A."/>
            <person name="Hide W."/>
            <person name="Bult C."/>
            <person name="Grimmond S.M."/>
            <person name="Teasdale R.D."/>
            <person name="Liu E.T."/>
            <person name="Brusic V."/>
            <person name="Quackenbush J."/>
            <person name="Wahlestedt C."/>
            <person name="Mattick J.S."/>
            <person name="Hume D.A."/>
            <person name="Kai C."/>
            <person name="Sasaki D."/>
            <person name="Tomaru Y."/>
            <person name="Fukuda S."/>
            <person name="Kanamori-Katayama M."/>
            <person name="Suzuki M."/>
            <person name="Aoki J."/>
            <person name="Arakawa T."/>
            <person name="Iida J."/>
            <person name="Imamura K."/>
            <person name="Itoh M."/>
            <person name="Kato T."/>
            <person name="Kawaji H."/>
            <person name="Kawagashira N."/>
            <person name="Kawashima T."/>
            <person name="Kojima M."/>
            <person name="Kondo S."/>
            <person name="Konno H."/>
            <person name="Nakano K."/>
            <person name="Ninomiya N."/>
            <person name="Nishio T."/>
            <person name="Okada M."/>
            <person name="Plessy C."/>
            <person name="Shibata K."/>
            <person name="Shiraki T."/>
            <person name="Suzuki S."/>
            <person name="Tagami M."/>
            <person name="Waki K."/>
            <person name="Watahiki A."/>
            <person name="Okamura-Oho Y."/>
            <person name="Suzuki H."/>
            <person name="Kawai J."/>
            <person name="Hayashizaki Y."/>
        </authorList>
    </citation>
    <scope>NUCLEOTIDE SEQUENCE [LARGE SCALE MRNA] (ISOFORMS 2 AND 3)</scope>
    <source>
        <strain>C57BL/6J</strain>
        <tissue>Ovary</tissue>
        <tissue>Testis</tissue>
    </source>
</reference>
<reference key="2">
    <citation type="journal article" date="2004" name="Genome Res.">
        <title>The status, quality, and expansion of the NIH full-length cDNA project: the Mammalian Gene Collection (MGC).</title>
        <authorList>
            <consortium name="The MGC Project Team"/>
        </authorList>
    </citation>
    <scope>NUCLEOTIDE SEQUENCE [LARGE SCALE MRNA] (ISOFORM 1)</scope>
    <source>
        <tissue>Olfactory epithelium</tissue>
    </source>
</reference>
<reference key="3">
    <citation type="journal article" date="2004" name="Mol. Cell. Proteomics">
        <title>Phosphoproteomic analysis of the developing mouse brain.</title>
        <authorList>
            <person name="Ballif B.A."/>
            <person name="Villen J."/>
            <person name="Beausoleil S.A."/>
            <person name="Schwartz D."/>
            <person name="Gygi S.P."/>
        </authorList>
    </citation>
    <scope>IDENTIFICATION BY MASS SPECTROMETRY [LARGE SCALE ANALYSIS]</scope>
    <source>
        <tissue>Embryonic brain</tissue>
    </source>
</reference>
<reference key="4">
    <citation type="journal article" date="2007" name="Proc. Natl. Acad. Sci. U.S.A.">
        <title>Large-scale phosphorylation analysis of mouse liver.</title>
        <authorList>
            <person name="Villen J."/>
            <person name="Beausoleil S.A."/>
            <person name="Gerber S.A."/>
            <person name="Gygi S.P."/>
        </authorList>
    </citation>
    <scope>PHOSPHORYLATION [LARGE SCALE ANALYSIS] AT SER-522 AND SER-525</scope>
    <scope>IDENTIFICATION BY MASS SPECTROMETRY [LARGE SCALE ANALYSIS]</scope>
    <source>
        <tissue>Liver</tissue>
    </source>
</reference>
<reference key="5">
    <citation type="journal article" date="2010" name="Cell">
        <title>A tissue-specific atlas of mouse protein phosphorylation and expression.</title>
        <authorList>
            <person name="Huttlin E.L."/>
            <person name="Jedrychowski M.P."/>
            <person name="Elias J.E."/>
            <person name="Goswami T."/>
            <person name="Rad R."/>
            <person name="Beausoleil S.A."/>
            <person name="Villen J."/>
            <person name="Haas W."/>
            <person name="Sowa M.E."/>
            <person name="Gygi S.P."/>
        </authorList>
    </citation>
    <scope>PHOSPHORYLATION [LARGE SCALE ANALYSIS] AT SER-522; THR-523; SER-525 AND SER-544</scope>
    <scope>IDENTIFICATION BY MASS SPECTROMETRY [LARGE SCALE ANALYSIS]</scope>
    <source>
        <tissue>Brain</tissue>
        <tissue>Heart</tissue>
        <tissue>Kidney</tissue>
        <tissue>Lung</tissue>
        <tissue>Spleen</tissue>
        <tissue>Testis</tissue>
    </source>
</reference>
<feature type="chain" id="PRO_0000219449" description="FERM domain-containing protein 6">
    <location>
        <begin position="1"/>
        <end position="622"/>
    </location>
</feature>
<feature type="domain" description="FERM" evidence="2">
    <location>
        <begin position="16"/>
        <end position="328"/>
    </location>
</feature>
<feature type="region of interest" description="Disordered" evidence="3">
    <location>
        <begin position="357"/>
        <end position="452"/>
    </location>
</feature>
<feature type="compositionally biased region" description="Low complexity" evidence="3">
    <location>
        <begin position="384"/>
        <end position="395"/>
    </location>
</feature>
<feature type="compositionally biased region" description="Low complexity" evidence="3">
    <location>
        <begin position="425"/>
        <end position="438"/>
    </location>
</feature>
<feature type="modified residue" description="Phosphoserine" evidence="6 7">
    <location>
        <position position="522"/>
    </location>
</feature>
<feature type="modified residue" description="Phosphothreonine" evidence="7">
    <location>
        <position position="523"/>
    </location>
</feature>
<feature type="modified residue" description="Phosphoserine" evidence="6 7">
    <location>
        <position position="525"/>
    </location>
</feature>
<feature type="modified residue" description="Phosphoserine" evidence="1">
    <location>
        <position position="542"/>
    </location>
</feature>
<feature type="modified residue" description="Phosphoserine" evidence="7">
    <location>
        <position position="544"/>
    </location>
</feature>
<feature type="splice variant" id="VSP_008024" description="In isoform 2." evidence="4">
    <location>
        <begin position="1"/>
        <end position="22"/>
    </location>
</feature>
<feature type="splice variant" id="VSP_008025" description="In isoform 2." evidence="4">
    <original>PNDKSVSIIIN</original>
    <variation>MCRIPRHCCLR</variation>
    <location>
        <begin position="23"/>
        <end position="33"/>
    </location>
</feature>
<feature type="splice variant" id="VSP_008026" description="In isoform 2 and isoform 3." evidence="4">
    <location>
        <begin position="91"/>
        <end position="98"/>
    </location>
</feature>
<feature type="splice variant" id="VSP_008027" description="In isoform 3." evidence="4">
    <original>LIVKEIGSSTSSSSETVVRLRGQSTDSLPQTICRKPKTSTDRHSLSLDDIRLYQKDFLRIAGLCQDTAQSYTF</original>
    <variation>ELLGQAVACRSPQAGTSKNRTVVGTLNPPGRRATAGGLIPGQVPSVEEMGEGTRVVSMFCSARFSEASSVGLI</variation>
    <location>
        <begin position="499"/>
        <end position="571"/>
    </location>
</feature>
<feature type="splice variant" id="VSP_008028" description="In isoform 3." evidence="4">
    <location>
        <begin position="572"/>
        <end position="622"/>
    </location>
</feature>
<feature type="sequence conflict" description="In Ref. 1; BAC26574." evidence="5" ref="1">
    <original>H</original>
    <variation>Q</variation>
    <location>
        <position position="321"/>
    </location>
</feature>
<feature type="sequence conflict" description="In Ref. 1; BAC35785." evidence="5" ref="1">
    <original>G</original>
    <variation>S</variation>
    <location>
        <position position="431"/>
    </location>
</feature>